<protein>
    <recommendedName>
        <fullName>Deaminated glutathione amidase</fullName>
        <shortName>dGSH amidase</shortName>
        <ecNumber evidence="1">3.5.1.128</ecNumber>
    </recommendedName>
    <alternativeName>
        <fullName>Nitrilase homolog 1</fullName>
    </alternativeName>
</protein>
<proteinExistence type="inferred from homology"/>
<organism>
    <name type="scientific">Dictyostelium discoideum</name>
    <name type="common">Social amoeba</name>
    <dbReference type="NCBI Taxonomy" id="44689"/>
    <lineage>
        <taxon>Eukaryota</taxon>
        <taxon>Amoebozoa</taxon>
        <taxon>Evosea</taxon>
        <taxon>Eumycetozoa</taxon>
        <taxon>Dictyostelia</taxon>
        <taxon>Dictyosteliales</taxon>
        <taxon>Dictyosteliaceae</taxon>
        <taxon>Dictyostelium</taxon>
    </lineage>
</organism>
<evidence type="ECO:0000250" key="1">
    <source>
        <dbReference type="UniProtKB" id="Q8VDK1"/>
    </source>
</evidence>
<evidence type="ECO:0000255" key="2">
    <source>
        <dbReference type="PROSITE-ProRule" id="PRU00054"/>
    </source>
</evidence>
<evidence type="ECO:0000305" key="3"/>
<reference key="1">
    <citation type="journal article" date="2002" name="Nature">
        <title>Sequence and analysis of chromosome 2 of Dictyostelium discoideum.</title>
        <authorList>
            <person name="Gloeckner G."/>
            <person name="Eichinger L."/>
            <person name="Szafranski K."/>
            <person name="Pachebat J.A."/>
            <person name="Bankier A.T."/>
            <person name="Dear P.H."/>
            <person name="Lehmann R."/>
            <person name="Baumgart C."/>
            <person name="Parra G."/>
            <person name="Abril J.F."/>
            <person name="Guigo R."/>
            <person name="Kumpf K."/>
            <person name="Tunggal B."/>
            <person name="Cox E.C."/>
            <person name="Quail M.A."/>
            <person name="Platzer M."/>
            <person name="Rosenthal A."/>
            <person name="Noegel A.A."/>
        </authorList>
    </citation>
    <scope>NUCLEOTIDE SEQUENCE [LARGE SCALE GENOMIC DNA]</scope>
    <source>
        <strain>AX4</strain>
    </source>
</reference>
<reference key="2">
    <citation type="journal article" date="2005" name="Nature">
        <title>The genome of the social amoeba Dictyostelium discoideum.</title>
        <authorList>
            <person name="Eichinger L."/>
            <person name="Pachebat J.A."/>
            <person name="Gloeckner G."/>
            <person name="Rajandream M.A."/>
            <person name="Sucgang R."/>
            <person name="Berriman M."/>
            <person name="Song J."/>
            <person name="Olsen R."/>
            <person name="Szafranski K."/>
            <person name="Xu Q."/>
            <person name="Tunggal B."/>
            <person name="Kummerfeld S."/>
            <person name="Madera M."/>
            <person name="Konfortov B.A."/>
            <person name="Rivero F."/>
            <person name="Bankier A.T."/>
            <person name="Lehmann R."/>
            <person name="Hamlin N."/>
            <person name="Davies R."/>
            <person name="Gaudet P."/>
            <person name="Fey P."/>
            <person name="Pilcher K."/>
            <person name="Chen G."/>
            <person name="Saunders D."/>
            <person name="Sodergren E.J."/>
            <person name="Davis P."/>
            <person name="Kerhornou A."/>
            <person name="Nie X."/>
            <person name="Hall N."/>
            <person name="Anjard C."/>
            <person name="Hemphill L."/>
            <person name="Bason N."/>
            <person name="Farbrother P."/>
            <person name="Desany B."/>
            <person name="Just E."/>
            <person name="Morio T."/>
            <person name="Rost R."/>
            <person name="Churcher C.M."/>
            <person name="Cooper J."/>
            <person name="Haydock S."/>
            <person name="van Driessche N."/>
            <person name="Cronin A."/>
            <person name="Goodhead I."/>
            <person name="Muzny D.M."/>
            <person name="Mourier T."/>
            <person name="Pain A."/>
            <person name="Lu M."/>
            <person name="Harper D."/>
            <person name="Lindsay R."/>
            <person name="Hauser H."/>
            <person name="James K.D."/>
            <person name="Quiles M."/>
            <person name="Madan Babu M."/>
            <person name="Saito T."/>
            <person name="Buchrieser C."/>
            <person name="Wardroper A."/>
            <person name="Felder M."/>
            <person name="Thangavelu M."/>
            <person name="Johnson D."/>
            <person name="Knights A."/>
            <person name="Loulseged H."/>
            <person name="Mungall K.L."/>
            <person name="Oliver K."/>
            <person name="Price C."/>
            <person name="Quail M.A."/>
            <person name="Urushihara H."/>
            <person name="Hernandez J."/>
            <person name="Rabbinowitsch E."/>
            <person name="Steffen D."/>
            <person name="Sanders M."/>
            <person name="Ma J."/>
            <person name="Kohara Y."/>
            <person name="Sharp S."/>
            <person name="Simmonds M.N."/>
            <person name="Spiegler S."/>
            <person name="Tivey A."/>
            <person name="Sugano S."/>
            <person name="White B."/>
            <person name="Walker D."/>
            <person name="Woodward J.R."/>
            <person name="Winckler T."/>
            <person name="Tanaka Y."/>
            <person name="Shaulsky G."/>
            <person name="Schleicher M."/>
            <person name="Weinstock G.M."/>
            <person name="Rosenthal A."/>
            <person name="Cox E.C."/>
            <person name="Chisholm R.L."/>
            <person name="Gibbs R.A."/>
            <person name="Loomis W.F."/>
            <person name="Platzer M."/>
            <person name="Kay R.R."/>
            <person name="Williams J.G."/>
            <person name="Dear P.H."/>
            <person name="Noegel A.A."/>
            <person name="Barrell B.G."/>
            <person name="Kuspa A."/>
        </authorList>
    </citation>
    <scope>NUCLEOTIDE SEQUENCE [LARGE SCALE GENOMIC DNA]</scope>
    <source>
        <strain>AX4</strain>
    </source>
</reference>
<dbReference type="EC" id="3.5.1.128" evidence="1"/>
<dbReference type="EMBL" id="AAFI02000010">
    <property type="protein sequence ID" value="EAL70683.1"/>
    <property type="molecule type" value="Genomic_DNA"/>
</dbReference>
<dbReference type="EMBL" id="AAFI02000010">
    <property type="protein sequence ID" value="EAL70714.1"/>
    <property type="molecule type" value="Genomic_DNA"/>
</dbReference>
<dbReference type="RefSeq" id="XP_644610.1">
    <property type="nucleotide sequence ID" value="XM_639518.1"/>
</dbReference>
<dbReference type="RefSeq" id="XP_644640.1">
    <property type="nucleotide sequence ID" value="XM_639548.1"/>
</dbReference>
<dbReference type="SMR" id="Q557J5"/>
<dbReference type="FunCoup" id="Q557J5">
    <property type="interactions" value="69"/>
</dbReference>
<dbReference type="STRING" id="44689.Q557J5"/>
<dbReference type="PaxDb" id="44689-DDB0302490"/>
<dbReference type="EnsemblProtists" id="EAL70683">
    <property type="protein sequence ID" value="EAL70683"/>
    <property type="gene ID" value="DDB_G0273519"/>
</dbReference>
<dbReference type="EnsemblProtists" id="EAL70714">
    <property type="protein sequence ID" value="EAL70714"/>
    <property type="gene ID" value="DDB_G0273457"/>
</dbReference>
<dbReference type="GeneID" id="8618974"/>
<dbReference type="GeneID" id="8619003"/>
<dbReference type="KEGG" id="ddi:DDB_G0273457"/>
<dbReference type="KEGG" id="ddi:DDB_G0273519"/>
<dbReference type="dictyBase" id="DDB_G0273457">
    <property type="gene designation" value="nit1-1"/>
</dbReference>
<dbReference type="dictyBase" id="DDB_G0273519">
    <property type="gene designation" value="nit1-2"/>
</dbReference>
<dbReference type="VEuPathDB" id="AmoebaDB:DDB_G0273519"/>
<dbReference type="eggNOG" id="KOG0807">
    <property type="taxonomic scope" value="Eukaryota"/>
</dbReference>
<dbReference type="HOGENOM" id="CLU_030130_1_2_1"/>
<dbReference type="InParanoid" id="Q557J5"/>
<dbReference type="OMA" id="MRVAVCQ"/>
<dbReference type="PhylomeDB" id="Q557J5"/>
<dbReference type="PRO" id="PR:Q557J5"/>
<dbReference type="Proteomes" id="UP000002195">
    <property type="component" value="Chromosome 2"/>
</dbReference>
<dbReference type="GO" id="GO:0110050">
    <property type="term" value="F:deaminated glutathione amidase activity"/>
    <property type="evidence" value="ECO:0007669"/>
    <property type="project" value="UniProtKB-EC"/>
</dbReference>
<dbReference type="CDD" id="cd07572">
    <property type="entry name" value="nit"/>
    <property type="match status" value="1"/>
</dbReference>
<dbReference type="Gene3D" id="3.60.110.10">
    <property type="entry name" value="Carbon-nitrogen hydrolase"/>
    <property type="match status" value="1"/>
</dbReference>
<dbReference type="InterPro" id="IPR003010">
    <property type="entry name" value="C-N_Hydrolase"/>
</dbReference>
<dbReference type="InterPro" id="IPR036526">
    <property type="entry name" value="C-N_Hydrolase_sf"/>
</dbReference>
<dbReference type="InterPro" id="IPR045254">
    <property type="entry name" value="Nit1/2_C-N_Hydrolase"/>
</dbReference>
<dbReference type="InterPro" id="IPR001110">
    <property type="entry name" value="UPF0012_CS"/>
</dbReference>
<dbReference type="PANTHER" id="PTHR23088:SF27">
    <property type="entry name" value="DEAMINATED GLUTATHIONE AMIDASE"/>
    <property type="match status" value="1"/>
</dbReference>
<dbReference type="PANTHER" id="PTHR23088">
    <property type="entry name" value="NITRILASE-RELATED"/>
    <property type="match status" value="1"/>
</dbReference>
<dbReference type="Pfam" id="PF00795">
    <property type="entry name" value="CN_hydrolase"/>
    <property type="match status" value="1"/>
</dbReference>
<dbReference type="SUPFAM" id="SSF56317">
    <property type="entry name" value="Carbon-nitrogen hydrolase"/>
    <property type="match status" value="1"/>
</dbReference>
<dbReference type="PROSITE" id="PS50263">
    <property type="entry name" value="CN_HYDROLASE"/>
    <property type="match status" value="1"/>
</dbReference>
<dbReference type="PROSITE" id="PS01227">
    <property type="entry name" value="UPF0012"/>
    <property type="match status" value="1"/>
</dbReference>
<name>NIT1_DICDI</name>
<gene>
    <name type="primary">nit1-1</name>
    <name type="ORF">DDB_G0273457</name>
</gene>
<gene>
    <name type="primary">nit1-2</name>
    <name type="ORF">DDB_G0273519</name>
</gene>
<keyword id="KW-0378">Hydrolase</keyword>
<keyword id="KW-1185">Reference proteome</keyword>
<accession>Q557J5</accession>
<accession>Q86KI6</accession>
<comment type="function">
    <text evidence="1">Catalyzes the hydrolysis of the amide bond in N-(4-oxoglutarate)-L-cysteinylglycine (deaminated glutathione), a metabolite repair reaction to dispose of the harmful deaminated glutathione.</text>
</comment>
<comment type="catalytic activity">
    <reaction evidence="1">
        <text>N-(4-oxoglutaryl)-L-cysteinylglycine + H2O = L-cysteinylglycine + 2-oxoglutarate</text>
        <dbReference type="Rhea" id="RHEA:54532"/>
        <dbReference type="ChEBI" id="CHEBI:15377"/>
        <dbReference type="ChEBI" id="CHEBI:16810"/>
        <dbReference type="ChEBI" id="CHEBI:61694"/>
        <dbReference type="ChEBI" id="CHEBI:138256"/>
        <dbReference type="EC" id="3.5.1.128"/>
    </reaction>
</comment>
<comment type="similarity">
    <text evidence="3">Belongs to the carbon-nitrogen hydrolase superfamily. NIT1/NIT2 family.</text>
</comment>
<comment type="caution">
    <text evidence="3">The gene for this protein is duplicated in strains AX3 and AX4. These strains contain a duplication of a segment of 750 kb of chromosome 2 compared to the corresponding sequence in strain AX2.</text>
</comment>
<feature type="chain" id="PRO_0000332972" description="Deaminated glutathione amidase">
    <location>
        <begin position="1"/>
        <end position="291"/>
    </location>
</feature>
<feature type="domain" description="CN hydrolase" evidence="2">
    <location>
        <begin position="13"/>
        <end position="268"/>
    </location>
</feature>
<feature type="active site" description="Proton acceptor" evidence="2">
    <location>
        <position position="52"/>
    </location>
</feature>
<feature type="active site" description="Proton donor" evidence="2">
    <location>
        <position position="130"/>
    </location>
</feature>
<feature type="active site" description="Nucleophile" evidence="2">
    <location>
        <position position="172"/>
    </location>
</feature>
<sequence>MIRNSKILMNKLKRIGLGQITSTNNKEDNFRKCKEMIEKAVENKVNLFCLPECFAFISGGIHQFESRDNAEYLDQKGGIIERYKDLAKQNNIWLSLGGFHEKILDDPNDMIYNTHLIIDSNGVIVCEYRKMHLFDVDIPSKGVKMNESKVVKGGNDLVVCDSPVGKLGLSICYDLRFPELYLSLRRMDAQILLVPSAFMKSTGEAHWKPLLQARAIENQTYVIAAAQTGDHHSKRSSYGHSMIIDPWGKVLHDLPDNLNDIAFVDIDLDYISTCRENIPVFNHKKLNNYKI</sequence>